<accession>Q87TR8</accession>
<dbReference type="EMBL" id="AE016853">
    <property type="protein sequence ID" value="AAO59028.1"/>
    <property type="molecule type" value="Genomic_DNA"/>
</dbReference>
<dbReference type="RefSeq" id="NP_795333.1">
    <property type="nucleotide sequence ID" value="NC_004578.1"/>
</dbReference>
<dbReference type="RefSeq" id="WP_002551315.1">
    <property type="nucleotide sequence ID" value="NC_004578.1"/>
</dbReference>
<dbReference type="SMR" id="Q87TR8"/>
<dbReference type="STRING" id="223283.PSPTO_5615"/>
<dbReference type="GeneID" id="98280769"/>
<dbReference type="KEGG" id="pst:PSPTO_5615"/>
<dbReference type="PATRIC" id="fig|223283.9.peg.5752"/>
<dbReference type="eggNOG" id="COG0230">
    <property type="taxonomic scope" value="Bacteria"/>
</dbReference>
<dbReference type="HOGENOM" id="CLU_129938_2_0_6"/>
<dbReference type="OrthoDB" id="9804164at2"/>
<dbReference type="PhylomeDB" id="Q87TR8"/>
<dbReference type="Proteomes" id="UP000002515">
    <property type="component" value="Chromosome"/>
</dbReference>
<dbReference type="GO" id="GO:1990904">
    <property type="term" value="C:ribonucleoprotein complex"/>
    <property type="evidence" value="ECO:0007669"/>
    <property type="project" value="UniProtKB-KW"/>
</dbReference>
<dbReference type="GO" id="GO:0005840">
    <property type="term" value="C:ribosome"/>
    <property type="evidence" value="ECO:0007669"/>
    <property type="project" value="UniProtKB-KW"/>
</dbReference>
<dbReference type="GO" id="GO:0003735">
    <property type="term" value="F:structural constituent of ribosome"/>
    <property type="evidence" value="ECO:0007669"/>
    <property type="project" value="InterPro"/>
</dbReference>
<dbReference type="GO" id="GO:0006412">
    <property type="term" value="P:translation"/>
    <property type="evidence" value="ECO:0007669"/>
    <property type="project" value="UniProtKB-UniRule"/>
</dbReference>
<dbReference type="FunFam" id="1.10.287.3980:FF:000001">
    <property type="entry name" value="Mitochondrial ribosomal protein L34"/>
    <property type="match status" value="1"/>
</dbReference>
<dbReference type="Gene3D" id="1.10.287.3980">
    <property type="match status" value="1"/>
</dbReference>
<dbReference type="HAMAP" id="MF_00391">
    <property type="entry name" value="Ribosomal_bL34"/>
    <property type="match status" value="1"/>
</dbReference>
<dbReference type="InterPro" id="IPR000271">
    <property type="entry name" value="Ribosomal_bL34"/>
</dbReference>
<dbReference type="InterPro" id="IPR020939">
    <property type="entry name" value="Ribosomal_bL34_CS"/>
</dbReference>
<dbReference type="NCBIfam" id="TIGR01030">
    <property type="entry name" value="rpmH_bact"/>
    <property type="match status" value="1"/>
</dbReference>
<dbReference type="PANTHER" id="PTHR14503:SF4">
    <property type="entry name" value="LARGE RIBOSOMAL SUBUNIT PROTEIN BL34M"/>
    <property type="match status" value="1"/>
</dbReference>
<dbReference type="PANTHER" id="PTHR14503">
    <property type="entry name" value="MITOCHONDRIAL RIBOSOMAL PROTEIN 34 FAMILY MEMBER"/>
    <property type="match status" value="1"/>
</dbReference>
<dbReference type="Pfam" id="PF00468">
    <property type="entry name" value="Ribosomal_L34"/>
    <property type="match status" value="1"/>
</dbReference>
<dbReference type="PROSITE" id="PS00784">
    <property type="entry name" value="RIBOSOMAL_L34"/>
    <property type="match status" value="1"/>
</dbReference>
<proteinExistence type="inferred from homology"/>
<evidence type="ECO:0000255" key="1">
    <source>
        <dbReference type="HAMAP-Rule" id="MF_00391"/>
    </source>
</evidence>
<evidence type="ECO:0000305" key="2"/>
<comment type="similarity">
    <text evidence="1">Belongs to the bacterial ribosomal protein bL34 family.</text>
</comment>
<name>RL34_PSESM</name>
<sequence>MKRTFQPSTIKRARTHGFRARMATKNGRAVLSRRRAKGRKRLAV</sequence>
<reference key="1">
    <citation type="journal article" date="2003" name="Proc. Natl. Acad. Sci. U.S.A.">
        <title>The complete genome sequence of the Arabidopsis and tomato pathogen Pseudomonas syringae pv. tomato DC3000.</title>
        <authorList>
            <person name="Buell C.R."/>
            <person name="Joardar V."/>
            <person name="Lindeberg M."/>
            <person name="Selengut J."/>
            <person name="Paulsen I.T."/>
            <person name="Gwinn M.L."/>
            <person name="Dodson R.J."/>
            <person name="DeBoy R.T."/>
            <person name="Durkin A.S."/>
            <person name="Kolonay J.F."/>
            <person name="Madupu R."/>
            <person name="Daugherty S.C."/>
            <person name="Brinkac L.M."/>
            <person name="Beanan M.J."/>
            <person name="Haft D.H."/>
            <person name="Nelson W.C."/>
            <person name="Davidsen T.M."/>
            <person name="Zafar N."/>
            <person name="Zhou L."/>
            <person name="Liu J."/>
            <person name="Yuan Q."/>
            <person name="Khouri H.M."/>
            <person name="Fedorova N.B."/>
            <person name="Tran B."/>
            <person name="Russell D."/>
            <person name="Berry K.J."/>
            <person name="Utterback T.R."/>
            <person name="Van Aken S.E."/>
            <person name="Feldblyum T.V."/>
            <person name="D'Ascenzo M."/>
            <person name="Deng W.-L."/>
            <person name="Ramos A.R."/>
            <person name="Alfano J.R."/>
            <person name="Cartinhour S."/>
            <person name="Chatterjee A.K."/>
            <person name="Delaney T.P."/>
            <person name="Lazarowitz S.G."/>
            <person name="Martin G.B."/>
            <person name="Schneider D.J."/>
            <person name="Tang X."/>
            <person name="Bender C.L."/>
            <person name="White O."/>
            <person name="Fraser C.M."/>
            <person name="Collmer A."/>
        </authorList>
    </citation>
    <scope>NUCLEOTIDE SEQUENCE [LARGE SCALE GENOMIC DNA]</scope>
    <source>
        <strain>ATCC BAA-871 / DC3000</strain>
    </source>
</reference>
<feature type="chain" id="PRO_0000187445" description="Large ribosomal subunit protein bL34">
    <location>
        <begin position="1"/>
        <end position="44"/>
    </location>
</feature>
<keyword id="KW-1185">Reference proteome</keyword>
<keyword id="KW-0687">Ribonucleoprotein</keyword>
<keyword id="KW-0689">Ribosomal protein</keyword>
<organism>
    <name type="scientific">Pseudomonas syringae pv. tomato (strain ATCC BAA-871 / DC3000)</name>
    <dbReference type="NCBI Taxonomy" id="223283"/>
    <lineage>
        <taxon>Bacteria</taxon>
        <taxon>Pseudomonadati</taxon>
        <taxon>Pseudomonadota</taxon>
        <taxon>Gammaproteobacteria</taxon>
        <taxon>Pseudomonadales</taxon>
        <taxon>Pseudomonadaceae</taxon>
        <taxon>Pseudomonas</taxon>
    </lineage>
</organism>
<protein>
    <recommendedName>
        <fullName evidence="1">Large ribosomal subunit protein bL34</fullName>
    </recommendedName>
    <alternativeName>
        <fullName evidence="2">50S ribosomal protein L34</fullName>
    </alternativeName>
</protein>
<gene>
    <name evidence="1" type="primary">rpmH</name>
    <name type="ordered locus">PSPTO_5615</name>
</gene>